<dbReference type="EMBL" id="CH408030">
    <property type="protein sequence ID" value="EAQ91278.1"/>
    <property type="molecule type" value="Genomic_DNA"/>
</dbReference>
<dbReference type="RefSeq" id="XP_001229729.1">
    <property type="nucleotide sequence ID" value="XM_001229728.1"/>
</dbReference>
<dbReference type="SMR" id="Q2H991"/>
<dbReference type="FunCoup" id="Q2H991">
    <property type="interactions" value="821"/>
</dbReference>
<dbReference type="STRING" id="306901.Q2H991"/>
<dbReference type="GeneID" id="4389687"/>
<dbReference type="VEuPathDB" id="FungiDB:CHGG_03213"/>
<dbReference type="eggNOG" id="KOG0396">
    <property type="taxonomic scope" value="Eukaryota"/>
</dbReference>
<dbReference type="HOGENOM" id="CLU_027445_2_0_1"/>
<dbReference type="InParanoid" id="Q2H991"/>
<dbReference type="OMA" id="ANHETAR"/>
<dbReference type="OrthoDB" id="1933455at2759"/>
<dbReference type="Proteomes" id="UP000001056">
    <property type="component" value="Unassembled WGS sequence"/>
</dbReference>
<dbReference type="GO" id="GO:0005737">
    <property type="term" value="C:cytoplasm"/>
    <property type="evidence" value="ECO:0007669"/>
    <property type="project" value="UniProtKB-SubCell"/>
</dbReference>
<dbReference type="GO" id="GO:0034657">
    <property type="term" value="C:GID complex"/>
    <property type="evidence" value="ECO:0007669"/>
    <property type="project" value="TreeGrafter"/>
</dbReference>
<dbReference type="GO" id="GO:0005634">
    <property type="term" value="C:nucleus"/>
    <property type="evidence" value="ECO:0007669"/>
    <property type="project" value="UniProtKB-SubCell"/>
</dbReference>
<dbReference type="GO" id="GO:0061630">
    <property type="term" value="F:ubiquitin protein ligase activity"/>
    <property type="evidence" value="ECO:0007669"/>
    <property type="project" value="InterPro"/>
</dbReference>
<dbReference type="GO" id="GO:0008270">
    <property type="term" value="F:zinc ion binding"/>
    <property type="evidence" value="ECO:0007669"/>
    <property type="project" value="UniProtKB-KW"/>
</dbReference>
<dbReference type="GO" id="GO:0045721">
    <property type="term" value="P:negative regulation of gluconeogenesis"/>
    <property type="evidence" value="ECO:0007669"/>
    <property type="project" value="UniProtKB-ARBA"/>
</dbReference>
<dbReference type="GO" id="GO:0043161">
    <property type="term" value="P:proteasome-mediated ubiquitin-dependent protein catabolic process"/>
    <property type="evidence" value="ECO:0007669"/>
    <property type="project" value="InterPro"/>
</dbReference>
<dbReference type="InterPro" id="IPR013144">
    <property type="entry name" value="CRA_dom"/>
</dbReference>
<dbReference type="InterPro" id="IPR024964">
    <property type="entry name" value="CTLH/CRA"/>
</dbReference>
<dbReference type="InterPro" id="IPR006595">
    <property type="entry name" value="CTLH_C"/>
</dbReference>
<dbReference type="InterPro" id="IPR045098">
    <property type="entry name" value="Fyv10_fam"/>
</dbReference>
<dbReference type="InterPro" id="IPR006594">
    <property type="entry name" value="LisH"/>
</dbReference>
<dbReference type="InterPro" id="IPR044063">
    <property type="entry name" value="ZF_RING_GID"/>
</dbReference>
<dbReference type="PANTHER" id="PTHR12170:SF2">
    <property type="entry name" value="E3 UBIQUITIN-PROTEIN TRANSFERASE MAEA"/>
    <property type="match status" value="1"/>
</dbReference>
<dbReference type="PANTHER" id="PTHR12170">
    <property type="entry name" value="MACROPHAGE ERYTHROBLAST ATTACHER-RELATED"/>
    <property type="match status" value="1"/>
</dbReference>
<dbReference type="Pfam" id="PF10607">
    <property type="entry name" value="CTLH"/>
    <property type="match status" value="1"/>
</dbReference>
<dbReference type="SMART" id="SM00757">
    <property type="entry name" value="CRA"/>
    <property type="match status" value="1"/>
</dbReference>
<dbReference type="SMART" id="SM00668">
    <property type="entry name" value="CTLH"/>
    <property type="match status" value="1"/>
</dbReference>
<dbReference type="PROSITE" id="PS50897">
    <property type="entry name" value="CTLH"/>
    <property type="match status" value="1"/>
</dbReference>
<dbReference type="PROSITE" id="PS50896">
    <property type="entry name" value="LISH"/>
    <property type="match status" value="1"/>
</dbReference>
<dbReference type="PROSITE" id="PS51867">
    <property type="entry name" value="ZF_RING_GID"/>
    <property type="match status" value="1"/>
</dbReference>
<sequence length="441" mass="49130">MADLEAANINHDNHLLLDQPCLRLPYELLRKNFRSVHYPFEWDSTSVKNVVKETANGLISGKASPQDAVENLDQMLVKMRGLKRKLTAAAKEEDRLYRQMDSRVAHLRELADLHTVDDVRYEAWSRQRLDRLLVDYMLRHGYDSSAIALADERGMRDLVDIDTFVVMSRIRKSLEGGSVQEALNWCNENKKELRKMQSNLEFLLRCQQYIEMMRTDSPAKMAEAIHHARKYITPFTETYPVEISSIAGLLAYRPGTISEPYASLYSASRWQKLADTFVEAHLKLLGLPMTPLLHIALSSGLSALKTPACHSTQLQVPTQPEESQPVNGAGDGAATATAAAASSTTSTAIPHHHHGTASLTTRVCPICSTELNALARSVRYAHHGKSRLLEQDLVLLPNGRVYGKARLDEYAAKSGLPAGQIKDLVTGEVFSGEEGRKVFVT</sequence>
<keyword id="KW-0963">Cytoplasm</keyword>
<keyword id="KW-0479">Metal-binding</keyword>
<keyword id="KW-0539">Nucleus</keyword>
<keyword id="KW-1185">Reference proteome</keyword>
<keyword id="KW-0862">Zinc</keyword>
<keyword id="KW-0863">Zinc-finger</keyword>
<organism>
    <name type="scientific">Chaetomium globosum (strain ATCC 6205 / CBS 148.51 / DSM 1962 / NBRC 6347 / NRRL 1970)</name>
    <name type="common">Soil fungus</name>
    <dbReference type="NCBI Taxonomy" id="306901"/>
    <lineage>
        <taxon>Eukaryota</taxon>
        <taxon>Fungi</taxon>
        <taxon>Dikarya</taxon>
        <taxon>Ascomycota</taxon>
        <taxon>Pezizomycotina</taxon>
        <taxon>Sordariomycetes</taxon>
        <taxon>Sordariomycetidae</taxon>
        <taxon>Sordariales</taxon>
        <taxon>Chaetomiaceae</taxon>
        <taxon>Chaetomium</taxon>
    </lineage>
</organism>
<comment type="function">
    <text evidence="1">Involved in the proteasome-dependent degradation of fructose-1,6-bisphosphatase.</text>
</comment>
<comment type="subcellular location">
    <subcellularLocation>
        <location evidence="1">Cytoplasm</location>
    </subcellularLocation>
    <subcellularLocation>
        <location evidence="1">Nucleus</location>
    </subcellularLocation>
</comment>
<comment type="similarity">
    <text evidence="6">Belongs to the FYV10 family.</text>
</comment>
<feature type="chain" id="PRO_0000292456" description="Protein FYV10">
    <location>
        <begin position="1"/>
        <end position="441"/>
    </location>
</feature>
<feature type="domain" description="LisH" evidence="3">
    <location>
        <begin position="125"/>
        <end position="157"/>
    </location>
</feature>
<feature type="domain" description="CTLH" evidence="2">
    <location>
        <begin position="163"/>
        <end position="220"/>
    </location>
</feature>
<feature type="zinc finger region" description="RING-Gid-type" evidence="4">
    <location>
        <begin position="364"/>
        <end position="426"/>
    </location>
</feature>
<feature type="region of interest" description="Disordered" evidence="5">
    <location>
        <begin position="312"/>
        <end position="354"/>
    </location>
</feature>
<feature type="compositionally biased region" description="Polar residues" evidence="5">
    <location>
        <begin position="312"/>
        <end position="326"/>
    </location>
</feature>
<feature type="compositionally biased region" description="Low complexity" evidence="5">
    <location>
        <begin position="333"/>
        <end position="348"/>
    </location>
</feature>
<evidence type="ECO:0000250" key="1"/>
<evidence type="ECO:0000255" key="2">
    <source>
        <dbReference type="PROSITE-ProRule" id="PRU00058"/>
    </source>
</evidence>
<evidence type="ECO:0000255" key="3">
    <source>
        <dbReference type="PROSITE-ProRule" id="PRU00126"/>
    </source>
</evidence>
<evidence type="ECO:0000255" key="4">
    <source>
        <dbReference type="PROSITE-ProRule" id="PRU01215"/>
    </source>
</evidence>
<evidence type="ECO:0000256" key="5">
    <source>
        <dbReference type="SAM" id="MobiDB-lite"/>
    </source>
</evidence>
<evidence type="ECO:0000305" key="6"/>
<protein>
    <recommendedName>
        <fullName>Protein FYV10</fullName>
    </recommendedName>
</protein>
<gene>
    <name type="primary">FYV10</name>
    <name type="ORF">CHGG_03213</name>
</gene>
<reference key="1">
    <citation type="journal article" date="2015" name="Genome Announc.">
        <title>Draft genome sequence of the cellulolytic fungus Chaetomium globosum.</title>
        <authorList>
            <person name="Cuomo C.A."/>
            <person name="Untereiner W.A."/>
            <person name="Ma L.-J."/>
            <person name="Grabherr M."/>
            <person name="Birren B.W."/>
        </authorList>
    </citation>
    <scope>NUCLEOTIDE SEQUENCE [LARGE SCALE GENOMIC DNA]</scope>
    <source>
        <strain>ATCC 6205 / CBS 148.51 / DSM 1962 / NBRC 6347 / NRRL 1970</strain>
    </source>
</reference>
<proteinExistence type="inferred from homology"/>
<accession>Q2H991</accession>
<name>FYV10_CHAGB</name>